<sequence length="422" mass="48675">MSEFNFISRLHNRGLISHITNEDNLSKLIENKSISLYCGFDPTEESLHIGHLLPLIMLKRFQIAGHRPIILIGGATSLIGDPSFKEKERVFNSNYNVNIWTEKITKQISCFLDFNCGKNSAVLLNNNTWFKQINILSFLRDVGKYFSVNTMINRAAVKQRITRPDQGISFTEFSYNLLQAYDFFILNQQYQVDLQIGGADQWGNISSGMHLIHRKTKRVVYGLTVPLLIQSNGIKFGKTESGTVWLDSNKTSPYKFYQFWMNIEDANVYYFLKLFTFIKVSEINKLEKNKNINNQIINDKSLLAKHITQLVHGKEKLLAAERITKFLFLKNTTHIEESDLQQLKQDGIPFIEVSNVKDLQEALVLTSLAQSRTQAKNMIISNSISINTEKIRKNHIFHEKDKLFGKFTLLSRGKKQHSLLCW</sequence>
<gene>
    <name evidence="1" type="primary">tyrS</name>
    <name type="ordered locus">BUAPTUC7_120</name>
</gene>
<keyword id="KW-0030">Aminoacyl-tRNA synthetase</keyword>
<keyword id="KW-0067">ATP-binding</keyword>
<keyword id="KW-0963">Cytoplasm</keyword>
<keyword id="KW-0436">Ligase</keyword>
<keyword id="KW-0547">Nucleotide-binding</keyword>
<keyword id="KW-0648">Protein biosynthesis</keyword>
<keyword id="KW-0694">RNA-binding</keyword>
<proteinExistence type="inferred from homology"/>
<organism>
    <name type="scientific">Buchnera aphidicola subsp. Acyrthosiphon pisum (strain Tuc7)</name>
    <dbReference type="NCBI Taxonomy" id="561501"/>
    <lineage>
        <taxon>Bacteria</taxon>
        <taxon>Pseudomonadati</taxon>
        <taxon>Pseudomonadota</taxon>
        <taxon>Gammaproteobacteria</taxon>
        <taxon>Enterobacterales</taxon>
        <taxon>Erwiniaceae</taxon>
        <taxon>Buchnera</taxon>
    </lineage>
</organism>
<name>SYY_BUCAT</name>
<dbReference type="EC" id="6.1.1.1" evidence="1"/>
<dbReference type="EMBL" id="CP001158">
    <property type="protein sequence ID" value="ACL29941.1"/>
    <property type="molecule type" value="Genomic_DNA"/>
</dbReference>
<dbReference type="RefSeq" id="WP_012619437.1">
    <property type="nucleotide sequence ID" value="NC_011834.1"/>
</dbReference>
<dbReference type="SMR" id="B8D726"/>
<dbReference type="KEGG" id="bau:BUAPTUC7_120"/>
<dbReference type="HOGENOM" id="CLU_024003_0_3_6"/>
<dbReference type="GO" id="GO:0005829">
    <property type="term" value="C:cytosol"/>
    <property type="evidence" value="ECO:0007669"/>
    <property type="project" value="TreeGrafter"/>
</dbReference>
<dbReference type="GO" id="GO:0005524">
    <property type="term" value="F:ATP binding"/>
    <property type="evidence" value="ECO:0007669"/>
    <property type="project" value="UniProtKB-UniRule"/>
</dbReference>
<dbReference type="GO" id="GO:0003723">
    <property type="term" value="F:RNA binding"/>
    <property type="evidence" value="ECO:0007669"/>
    <property type="project" value="UniProtKB-KW"/>
</dbReference>
<dbReference type="GO" id="GO:0004831">
    <property type="term" value="F:tyrosine-tRNA ligase activity"/>
    <property type="evidence" value="ECO:0007669"/>
    <property type="project" value="UniProtKB-UniRule"/>
</dbReference>
<dbReference type="GO" id="GO:0006437">
    <property type="term" value="P:tyrosyl-tRNA aminoacylation"/>
    <property type="evidence" value="ECO:0007669"/>
    <property type="project" value="UniProtKB-UniRule"/>
</dbReference>
<dbReference type="CDD" id="cd00805">
    <property type="entry name" value="TyrRS_core"/>
    <property type="match status" value="1"/>
</dbReference>
<dbReference type="FunFam" id="1.10.240.10:FF:000001">
    <property type="entry name" value="Tyrosine--tRNA ligase"/>
    <property type="match status" value="1"/>
</dbReference>
<dbReference type="FunFam" id="3.40.50.620:FF:000008">
    <property type="entry name" value="Tyrosine--tRNA ligase"/>
    <property type="match status" value="1"/>
</dbReference>
<dbReference type="Gene3D" id="3.40.50.620">
    <property type="entry name" value="HUPs"/>
    <property type="match status" value="1"/>
</dbReference>
<dbReference type="Gene3D" id="3.10.290.10">
    <property type="entry name" value="RNA-binding S4 domain"/>
    <property type="match status" value="1"/>
</dbReference>
<dbReference type="Gene3D" id="1.10.240.10">
    <property type="entry name" value="Tyrosyl-Transfer RNA Synthetase"/>
    <property type="match status" value="1"/>
</dbReference>
<dbReference type="HAMAP" id="MF_02006">
    <property type="entry name" value="Tyr_tRNA_synth_type1"/>
    <property type="match status" value="1"/>
</dbReference>
<dbReference type="InterPro" id="IPR002305">
    <property type="entry name" value="aa-tRNA-synth_Ic"/>
</dbReference>
<dbReference type="InterPro" id="IPR014729">
    <property type="entry name" value="Rossmann-like_a/b/a_fold"/>
</dbReference>
<dbReference type="InterPro" id="IPR036986">
    <property type="entry name" value="S4_RNA-bd_sf"/>
</dbReference>
<dbReference type="InterPro" id="IPR054608">
    <property type="entry name" value="SYY-like_C"/>
</dbReference>
<dbReference type="InterPro" id="IPR002307">
    <property type="entry name" value="Tyr-tRNA-ligase"/>
</dbReference>
<dbReference type="InterPro" id="IPR024088">
    <property type="entry name" value="Tyr-tRNA-ligase_bac-type"/>
</dbReference>
<dbReference type="InterPro" id="IPR024107">
    <property type="entry name" value="Tyr-tRNA-ligase_bac_1"/>
</dbReference>
<dbReference type="NCBIfam" id="TIGR00234">
    <property type="entry name" value="tyrS"/>
    <property type="match status" value="1"/>
</dbReference>
<dbReference type="PANTHER" id="PTHR11766:SF0">
    <property type="entry name" value="TYROSINE--TRNA LIGASE, MITOCHONDRIAL"/>
    <property type="match status" value="1"/>
</dbReference>
<dbReference type="PANTHER" id="PTHR11766">
    <property type="entry name" value="TYROSYL-TRNA SYNTHETASE"/>
    <property type="match status" value="1"/>
</dbReference>
<dbReference type="Pfam" id="PF22421">
    <property type="entry name" value="SYY_C-terminal"/>
    <property type="match status" value="1"/>
</dbReference>
<dbReference type="Pfam" id="PF00579">
    <property type="entry name" value="tRNA-synt_1b"/>
    <property type="match status" value="1"/>
</dbReference>
<dbReference type="PRINTS" id="PR01040">
    <property type="entry name" value="TRNASYNTHTYR"/>
</dbReference>
<dbReference type="SUPFAM" id="SSF55174">
    <property type="entry name" value="Alpha-L RNA-binding motif"/>
    <property type="match status" value="1"/>
</dbReference>
<dbReference type="SUPFAM" id="SSF52374">
    <property type="entry name" value="Nucleotidylyl transferase"/>
    <property type="match status" value="1"/>
</dbReference>
<dbReference type="PROSITE" id="PS50889">
    <property type="entry name" value="S4"/>
    <property type="match status" value="1"/>
</dbReference>
<feature type="chain" id="PRO_1000189267" description="Tyrosine--tRNA ligase">
    <location>
        <begin position="1"/>
        <end position="422"/>
    </location>
</feature>
<feature type="domain" description="S4 RNA-binding" evidence="1">
    <location>
        <begin position="357"/>
        <end position="414"/>
    </location>
</feature>
<feature type="short sequence motif" description="'HIGH' region">
    <location>
        <begin position="42"/>
        <end position="51"/>
    </location>
</feature>
<feature type="short sequence motif" description="'KMSKS' region">
    <location>
        <begin position="235"/>
        <end position="239"/>
    </location>
</feature>
<feature type="binding site" evidence="1">
    <location>
        <position position="37"/>
    </location>
    <ligand>
        <name>L-tyrosine</name>
        <dbReference type="ChEBI" id="CHEBI:58315"/>
    </ligand>
</feature>
<feature type="binding site" evidence="1">
    <location>
        <position position="175"/>
    </location>
    <ligand>
        <name>L-tyrosine</name>
        <dbReference type="ChEBI" id="CHEBI:58315"/>
    </ligand>
</feature>
<feature type="binding site" evidence="1">
    <location>
        <position position="179"/>
    </location>
    <ligand>
        <name>L-tyrosine</name>
        <dbReference type="ChEBI" id="CHEBI:58315"/>
    </ligand>
</feature>
<feature type="binding site" evidence="1">
    <location>
        <position position="238"/>
    </location>
    <ligand>
        <name>ATP</name>
        <dbReference type="ChEBI" id="CHEBI:30616"/>
    </ligand>
</feature>
<comment type="function">
    <text evidence="1">Catalyzes the attachment of tyrosine to tRNA(Tyr) in a two-step reaction: tyrosine is first activated by ATP to form Tyr-AMP and then transferred to the acceptor end of tRNA(Tyr).</text>
</comment>
<comment type="catalytic activity">
    <reaction evidence="1">
        <text>tRNA(Tyr) + L-tyrosine + ATP = L-tyrosyl-tRNA(Tyr) + AMP + diphosphate + H(+)</text>
        <dbReference type="Rhea" id="RHEA:10220"/>
        <dbReference type="Rhea" id="RHEA-COMP:9706"/>
        <dbReference type="Rhea" id="RHEA-COMP:9707"/>
        <dbReference type="ChEBI" id="CHEBI:15378"/>
        <dbReference type="ChEBI" id="CHEBI:30616"/>
        <dbReference type="ChEBI" id="CHEBI:33019"/>
        <dbReference type="ChEBI" id="CHEBI:58315"/>
        <dbReference type="ChEBI" id="CHEBI:78442"/>
        <dbReference type="ChEBI" id="CHEBI:78536"/>
        <dbReference type="ChEBI" id="CHEBI:456215"/>
        <dbReference type="EC" id="6.1.1.1"/>
    </reaction>
</comment>
<comment type="subunit">
    <text evidence="1">Homodimer.</text>
</comment>
<comment type="subcellular location">
    <subcellularLocation>
        <location evidence="1">Cytoplasm</location>
    </subcellularLocation>
</comment>
<comment type="similarity">
    <text evidence="1">Belongs to the class-I aminoacyl-tRNA synthetase family. TyrS type 1 subfamily.</text>
</comment>
<accession>B8D726</accession>
<evidence type="ECO:0000255" key="1">
    <source>
        <dbReference type="HAMAP-Rule" id="MF_02006"/>
    </source>
</evidence>
<reference key="1">
    <citation type="journal article" date="2009" name="Science">
        <title>The dynamics and time scale of ongoing genomic erosion in symbiotic bacteria.</title>
        <authorList>
            <person name="Moran N.A."/>
            <person name="McLaughlin H.J."/>
            <person name="Sorek R."/>
        </authorList>
    </citation>
    <scope>NUCLEOTIDE SEQUENCE [LARGE SCALE GENOMIC DNA]</scope>
    <source>
        <strain>Tuc7</strain>
    </source>
</reference>
<protein>
    <recommendedName>
        <fullName evidence="1">Tyrosine--tRNA ligase</fullName>
        <ecNumber evidence="1">6.1.1.1</ecNumber>
    </recommendedName>
    <alternativeName>
        <fullName evidence="1">Tyrosyl-tRNA synthetase</fullName>
        <shortName evidence="1">TyrRS</shortName>
    </alternativeName>
</protein>